<gene>
    <name evidence="1" type="primary">pyrF</name>
    <name type="ordered locus">BAV0575</name>
</gene>
<keyword id="KW-0210">Decarboxylase</keyword>
<keyword id="KW-0456">Lyase</keyword>
<keyword id="KW-0665">Pyrimidine biosynthesis</keyword>
<keyword id="KW-1185">Reference proteome</keyword>
<reference key="1">
    <citation type="journal article" date="2006" name="J. Bacteriol.">
        <title>Comparison of the genome sequence of the poultry pathogen Bordetella avium with those of B. bronchiseptica, B. pertussis, and B. parapertussis reveals extensive diversity in surface structures associated with host interaction.</title>
        <authorList>
            <person name="Sebaihia M."/>
            <person name="Preston A."/>
            <person name="Maskell D.J."/>
            <person name="Kuzmiak H."/>
            <person name="Connell T.D."/>
            <person name="King N.D."/>
            <person name="Orndorff P.E."/>
            <person name="Miyamoto D.M."/>
            <person name="Thomson N.R."/>
            <person name="Harris D."/>
            <person name="Goble A."/>
            <person name="Lord A."/>
            <person name="Murphy L."/>
            <person name="Quail M.A."/>
            <person name="Rutter S."/>
            <person name="Squares R."/>
            <person name="Squares S."/>
            <person name="Woodward J."/>
            <person name="Parkhill J."/>
            <person name="Temple L.M."/>
        </authorList>
    </citation>
    <scope>NUCLEOTIDE SEQUENCE [LARGE SCALE GENOMIC DNA]</scope>
    <source>
        <strain>197N</strain>
    </source>
</reference>
<accession>Q2KY06</accession>
<sequence>MNFLQKLEHAWATQNSLLQVGLDPDPARFPAELQGRPDAILSFCRGIVDATAPFASSFKPQIAYFAAHRAEDQLEALCGHIRDKYPHLPIVLDAKRGDIGSTAENYAREAFERYQAHAVTVSPYMGLDSVEPYLAWRDRGVIVLCRTSNPGGSDLQFLPMADGQPLYLHVAGLVADKWNAHGQCGLVVGATYPNELAAVRKRVGDSLPLLVPGIGAQGGDINATVQAGANSARAGMMINSSRAIIYASGGEDWREAAAEAARGLRDAINAVR</sequence>
<dbReference type="EC" id="4.1.1.23" evidence="1"/>
<dbReference type="EMBL" id="AM167904">
    <property type="protein sequence ID" value="CAJ48180.1"/>
    <property type="molecule type" value="Genomic_DNA"/>
</dbReference>
<dbReference type="RefSeq" id="WP_012416271.1">
    <property type="nucleotide sequence ID" value="NC_010645.1"/>
</dbReference>
<dbReference type="SMR" id="Q2KY06"/>
<dbReference type="STRING" id="360910.BAV0575"/>
<dbReference type="GeneID" id="92936246"/>
<dbReference type="KEGG" id="bav:BAV0575"/>
<dbReference type="eggNOG" id="COG0284">
    <property type="taxonomic scope" value="Bacteria"/>
</dbReference>
<dbReference type="HOGENOM" id="CLU_060704_1_0_4"/>
<dbReference type="OrthoDB" id="9808470at2"/>
<dbReference type="UniPathway" id="UPA00070">
    <property type="reaction ID" value="UER00120"/>
</dbReference>
<dbReference type="Proteomes" id="UP000001977">
    <property type="component" value="Chromosome"/>
</dbReference>
<dbReference type="GO" id="GO:0004590">
    <property type="term" value="F:orotidine-5'-phosphate decarboxylase activity"/>
    <property type="evidence" value="ECO:0007669"/>
    <property type="project" value="UniProtKB-UniRule"/>
</dbReference>
<dbReference type="GO" id="GO:0006207">
    <property type="term" value="P:'de novo' pyrimidine nucleobase biosynthetic process"/>
    <property type="evidence" value="ECO:0007669"/>
    <property type="project" value="InterPro"/>
</dbReference>
<dbReference type="GO" id="GO:0044205">
    <property type="term" value="P:'de novo' UMP biosynthetic process"/>
    <property type="evidence" value="ECO:0007669"/>
    <property type="project" value="UniProtKB-UniRule"/>
</dbReference>
<dbReference type="CDD" id="cd04725">
    <property type="entry name" value="OMP_decarboxylase_like"/>
    <property type="match status" value="1"/>
</dbReference>
<dbReference type="Gene3D" id="3.20.20.70">
    <property type="entry name" value="Aldolase class I"/>
    <property type="match status" value="1"/>
</dbReference>
<dbReference type="HAMAP" id="MF_01215">
    <property type="entry name" value="OMPdecase_type2"/>
    <property type="match status" value="1"/>
</dbReference>
<dbReference type="InterPro" id="IPR013785">
    <property type="entry name" value="Aldolase_TIM"/>
</dbReference>
<dbReference type="InterPro" id="IPR018089">
    <property type="entry name" value="OMPdecase_AS"/>
</dbReference>
<dbReference type="InterPro" id="IPR011995">
    <property type="entry name" value="OMPdecase_type-2"/>
</dbReference>
<dbReference type="InterPro" id="IPR001754">
    <property type="entry name" value="OMPdeCOase_dom"/>
</dbReference>
<dbReference type="InterPro" id="IPR011060">
    <property type="entry name" value="RibuloseP-bd_barrel"/>
</dbReference>
<dbReference type="NCBIfam" id="TIGR02127">
    <property type="entry name" value="pyrF_sub2"/>
    <property type="match status" value="1"/>
</dbReference>
<dbReference type="PANTHER" id="PTHR43375">
    <property type="entry name" value="OROTIDINE 5'-PHOSPHATE DECARBOXYLASE"/>
    <property type="match status" value="1"/>
</dbReference>
<dbReference type="PANTHER" id="PTHR43375:SF1">
    <property type="entry name" value="OROTIDINE 5'-PHOSPHATE DECARBOXYLASE"/>
    <property type="match status" value="1"/>
</dbReference>
<dbReference type="Pfam" id="PF00215">
    <property type="entry name" value="OMPdecase"/>
    <property type="match status" value="1"/>
</dbReference>
<dbReference type="SMART" id="SM00934">
    <property type="entry name" value="OMPdecase"/>
    <property type="match status" value="1"/>
</dbReference>
<dbReference type="SUPFAM" id="SSF51366">
    <property type="entry name" value="Ribulose-phoshate binding barrel"/>
    <property type="match status" value="1"/>
</dbReference>
<dbReference type="PROSITE" id="PS00156">
    <property type="entry name" value="OMPDECASE"/>
    <property type="match status" value="1"/>
</dbReference>
<organism>
    <name type="scientific">Bordetella avium (strain 197N)</name>
    <dbReference type="NCBI Taxonomy" id="360910"/>
    <lineage>
        <taxon>Bacteria</taxon>
        <taxon>Pseudomonadati</taxon>
        <taxon>Pseudomonadota</taxon>
        <taxon>Betaproteobacteria</taxon>
        <taxon>Burkholderiales</taxon>
        <taxon>Alcaligenaceae</taxon>
        <taxon>Bordetella</taxon>
    </lineage>
</organism>
<feature type="chain" id="PRO_1000066456" description="Orotidine 5'-phosphate decarboxylase">
    <location>
        <begin position="1"/>
        <end position="272"/>
    </location>
</feature>
<feature type="active site" description="Proton donor" evidence="1">
    <location>
        <position position="95"/>
    </location>
</feature>
<protein>
    <recommendedName>
        <fullName evidence="1">Orotidine 5'-phosphate decarboxylase</fullName>
        <ecNumber evidence="1">4.1.1.23</ecNumber>
    </recommendedName>
    <alternativeName>
        <fullName evidence="1">OMP decarboxylase</fullName>
        <shortName evidence="1">OMPDCase</shortName>
        <shortName evidence="1">OMPdecase</shortName>
    </alternativeName>
</protein>
<comment type="catalytic activity">
    <reaction evidence="1">
        <text>orotidine 5'-phosphate + H(+) = UMP + CO2</text>
        <dbReference type="Rhea" id="RHEA:11596"/>
        <dbReference type="ChEBI" id="CHEBI:15378"/>
        <dbReference type="ChEBI" id="CHEBI:16526"/>
        <dbReference type="ChEBI" id="CHEBI:57538"/>
        <dbReference type="ChEBI" id="CHEBI:57865"/>
        <dbReference type="EC" id="4.1.1.23"/>
    </reaction>
</comment>
<comment type="pathway">
    <text evidence="1">Pyrimidine metabolism; UMP biosynthesis via de novo pathway; UMP from orotate: step 2/2.</text>
</comment>
<comment type="similarity">
    <text evidence="1">Belongs to the OMP decarboxylase family. Type 2 subfamily.</text>
</comment>
<evidence type="ECO:0000255" key="1">
    <source>
        <dbReference type="HAMAP-Rule" id="MF_01215"/>
    </source>
</evidence>
<proteinExistence type="inferred from homology"/>
<name>PYRF_BORA1</name>